<feature type="chain" id="PRO_0000380228" description="Nitric oxide synthase-interacting protein homolog">
    <location>
        <begin position="1"/>
        <end position="333"/>
    </location>
</feature>
<feature type="region of interest" description="Disordered" evidence="3">
    <location>
        <begin position="120"/>
        <end position="181"/>
    </location>
</feature>
<feature type="coiled-coil region" evidence="2">
    <location>
        <begin position="73"/>
        <end position="119"/>
    </location>
</feature>
<feature type="compositionally biased region" description="Low complexity" evidence="3">
    <location>
        <begin position="127"/>
        <end position="175"/>
    </location>
</feature>
<proteinExistence type="evidence at transcript level"/>
<reference key="1">
    <citation type="journal article" date="2005" name="Nature">
        <title>The genome of the social amoeba Dictyostelium discoideum.</title>
        <authorList>
            <person name="Eichinger L."/>
            <person name="Pachebat J.A."/>
            <person name="Gloeckner G."/>
            <person name="Rajandream M.A."/>
            <person name="Sucgang R."/>
            <person name="Berriman M."/>
            <person name="Song J."/>
            <person name="Olsen R."/>
            <person name="Szafranski K."/>
            <person name="Xu Q."/>
            <person name="Tunggal B."/>
            <person name="Kummerfeld S."/>
            <person name="Madera M."/>
            <person name="Konfortov B.A."/>
            <person name="Rivero F."/>
            <person name="Bankier A.T."/>
            <person name="Lehmann R."/>
            <person name="Hamlin N."/>
            <person name="Davies R."/>
            <person name="Gaudet P."/>
            <person name="Fey P."/>
            <person name="Pilcher K."/>
            <person name="Chen G."/>
            <person name="Saunders D."/>
            <person name="Sodergren E.J."/>
            <person name="Davis P."/>
            <person name="Kerhornou A."/>
            <person name="Nie X."/>
            <person name="Hall N."/>
            <person name="Anjard C."/>
            <person name="Hemphill L."/>
            <person name="Bason N."/>
            <person name="Farbrother P."/>
            <person name="Desany B."/>
            <person name="Just E."/>
            <person name="Morio T."/>
            <person name="Rost R."/>
            <person name="Churcher C.M."/>
            <person name="Cooper J."/>
            <person name="Haydock S."/>
            <person name="van Driessche N."/>
            <person name="Cronin A."/>
            <person name="Goodhead I."/>
            <person name="Muzny D.M."/>
            <person name="Mourier T."/>
            <person name="Pain A."/>
            <person name="Lu M."/>
            <person name="Harper D."/>
            <person name="Lindsay R."/>
            <person name="Hauser H."/>
            <person name="James K.D."/>
            <person name="Quiles M."/>
            <person name="Madan Babu M."/>
            <person name="Saito T."/>
            <person name="Buchrieser C."/>
            <person name="Wardroper A."/>
            <person name="Felder M."/>
            <person name="Thangavelu M."/>
            <person name="Johnson D."/>
            <person name="Knights A."/>
            <person name="Loulseged H."/>
            <person name="Mungall K.L."/>
            <person name="Oliver K."/>
            <person name="Price C."/>
            <person name="Quail M.A."/>
            <person name="Urushihara H."/>
            <person name="Hernandez J."/>
            <person name="Rabbinowitsch E."/>
            <person name="Steffen D."/>
            <person name="Sanders M."/>
            <person name="Ma J."/>
            <person name="Kohara Y."/>
            <person name="Sharp S."/>
            <person name="Simmonds M.N."/>
            <person name="Spiegler S."/>
            <person name="Tivey A."/>
            <person name="Sugano S."/>
            <person name="White B."/>
            <person name="Walker D."/>
            <person name="Woodward J.R."/>
            <person name="Winckler T."/>
            <person name="Tanaka Y."/>
            <person name="Shaulsky G."/>
            <person name="Schleicher M."/>
            <person name="Weinstock G.M."/>
            <person name="Rosenthal A."/>
            <person name="Cox E.C."/>
            <person name="Chisholm R.L."/>
            <person name="Gibbs R.A."/>
            <person name="Loomis W.F."/>
            <person name="Platzer M."/>
            <person name="Kay R.R."/>
            <person name="Williams J.G."/>
            <person name="Dear P.H."/>
            <person name="Noegel A.A."/>
            <person name="Barrell B.G."/>
            <person name="Kuspa A."/>
        </authorList>
    </citation>
    <scope>NUCLEOTIDE SEQUENCE [LARGE SCALE GENOMIC DNA]</scope>
    <source>
        <strain>AX4</strain>
    </source>
</reference>
<reference key="2">
    <citation type="journal article" date="2008" name="BMC Microbiol.">
        <title>Dictyostelium transcriptional responses to Pseudomonas aeruginosa: common and specific effects from PAO1 and PA14 strains.</title>
        <authorList>
            <person name="Carilla-Latorre S."/>
            <person name="Calvo-Garrido J."/>
            <person name="Bloomfield G."/>
            <person name="Skelton J."/>
            <person name="Kay R.R."/>
            <person name="Ivens A."/>
            <person name="Martinez J.L."/>
            <person name="Escalante R."/>
        </authorList>
    </citation>
    <scope>INDUCTION [LARGE SCALE ANALYSIS]</scope>
</reference>
<reference key="3">
    <citation type="journal article" date="2008" name="BMC Genomics">
        <title>Genome-wide transcriptional changes induced by phagocytosis or growth on bacteria in Dictyostelium.</title>
        <authorList>
            <person name="Sillo A."/>
            <person name="Bloomfield G."/>
            <person name="Balest A."/>
            <person name="Balbo A."/>
            <person name="Pergolizzi B."/>
            <person name="Peracino B."/>
            <person name="Skelton J."/>
            <person name="Ivens A."/>
            <person name="Bozzaro S."/>
        </authorList>
    </citation>
    <scope>INDUCTION [LARGE SCALE ANALYSIS]</scope>
</reference>
<comment type="function">
    <text evidence="1">Regulates nitric oxide production.</text>
</comment>
<comment type="subcellular location">
    <subcellularLocation>
        <location evidence="1">Cytoplasm</location>
    </subcellularLocation>
    <subcellularLocation>
        <location evidence="1">Nucleus</location>
    </subcellularLocation>
</comment>
<comment type="induction">
    <text evidence="4 5">Down-regulated by Pseudomonas aeruginosa, PAO1 strain and PA14 strain infection and by growth on bacteria.</text>
</comment>
<comment type="similarity">
    <text evidence="6">Belongs to the NOSIP family.</text>
</comment>
<protein>
    <recommendedName>
        <fullName>Nitric oxide synthase-interacting protein homolog</fullName>
    </recommendedName>
</protein>
<accession>Q55DU4</accession>
<gene>
    <name type="primary">nosip</name>
    <name type="ORF">DDB_G0270882</name>
</gene>
<organism>
    <name type="scientific">Dictyostelium discoideum</name>
    <name type="common">Social amoeba</name>
    <dbReference type="NCBI Taxonomy" id="44689"/>
    <lineage>
        <taxon>Eukaryota</taxon>
        <taxon>Amoebozoa</taxon>
        <taxon>Evosea</taxon>
        <taxon>Eumycetozoa</taxon>
        <taxon>Dictyostelia</taxon>
        <taxon>Dictyosteliales</taxon>
        <taxon>Dictyosteliaceae</taxon>
        <taxon>Dictyostelium</taxon>
    </lineage>
</organism>
<name>NOSIP_DICDI</name>
<evidence type="ECO:0000250" key="1"/>
<evidence type="ECO:0000255" key="2"/>
<evidence type="ECO:0000256" key="3">
    <source>
        <dbReference type="SAM" id="MobiDB-lite"/>
    </source>
</evidence>
<evidence type="ECO:0000269" key="4">
    <source>
    </source>
</evidence>
<evidence type="ECO:0000269" key="5">
    <source>
    </source>
</evidence>
<evidence type="ECO:0000305" key="6"/>
<dbReference type="EMBL" id="AAFI02000005">
    <property type="protein sequence ID" value="EAL72791.1"/>
    <property type="molecule type" value="Genomic_DNA"/>
</dbReference>
<dbReference type="RefSeq" id="XP_646037.1">
    <property type="nucleotide sequence ID" value="XM_640945.1"/>
</dbReference>
<dbReference type="SMR" id="Q55DU4"/>
<dbReference type="FunCoup" id="Q55DU4">
    <property type="interactions" value="959"/>
</dbReference>
<dbReference type="STRING" id="44689.Q55DU4"/>
<dbReference type="PaxDb" id="44689-DDB0302416"/>
<dbReference type="EnsemblProtists" id="EAL72791">
    <property type="protein sequence ID" value="EAL72791"/>
    <property type="gene ID" value="DDB_G0270882"/>
</dbReference>
<dbReference type="GeneID" id="8616984"/>
<dbReference type="KEGG" id="ddi:DDB_G0270882"/>
<dbReference type="dictyBase" id="DDB_G0270882">
    <property type="gene designation" value="nosip"/>
</dbReference>
<dbReference type="VEuPathDB" id="AmoebaDB:DDB_G0270882"/>
<dbReference type="eggNOG" id="KOG3039">
    <property type="taxonomic scope" value="Eukaryota"/>
</dbReference>
<dbReference type="HOGENOM" id="CLU_053742_1_0_1"/>
<dbReference type="InParanoid" id="Q55DU4"/>
<dbReference type="OMA" id="PCVTKFM"/>
<dbReference type="PhylomeDB" id="Q55DU4"/>
<dbReference type="Reactome" id="R-DDI-203754">
    <property type="pathway name" value="NOSIP mediated eNOS trafficking"/>
</dbReference>
<dbReference type="PRO" id="PR:Q55DU4"/>
<dbReference type="Proteomes" id="UP000002195">
    <property type="component" value="Chromosome 1"/>
</dbReference>
<dbReference type="GO" id="GO:0005737">
    <property type="term" value="C:cytoplasm"/>
    <property type="evidence" value="ECO:0007669"/>
    <property type="project" value="UniProtKB-SubCell"/>
</dbReference>
<dbReference type="GO" id="GO:0005634">
    <property type="term" value="C:nucleus"/>
    <property type="evidence" value="ECO:0000250"/>
    <property type="project" value="dictyBase"/>
</dbReference>
<dbReference type="GO" id="GO:0140313">
    <property type="term" value="F:molecular sequestering activity"/>
    <property type="evidence" value="ECO:0000250"/>
    <property type="project" value="dictyBase"/>
</dbReference>
<dbReference type="GO" id="GO:0003723">
    <property type="term" value="F:RNA binding"/>
    <property type="evidence" value="ECO:0000304"/>
    <property type="project" value="dictyBase"/>
</dbReference>
<dbReference type="GO" id="GO:0061630">
    <property type="term" value="F:ubiquitin protein ligase activity"/>
    <property type="evidence" value="ECO:0007669"/>
    <property type="project" value="InterPro"/>
</dbReference>
<dbReference type="GO" id="GO:0045428">
    <property type="term" value="P:regulation of nitric oxide biosynthetic process"/>
    <property type="evidence" value="ECO:0000304"/>
    <property type="project" value="dictyBase"/>
</dbReference>
<dbReference type="Gene3D" id="3.30.40.10">
    <property type="entry name" value="Zinc/RING finger domain, C3HC4 (zinc finger)"/>
    <property type="match status" value="2"/>
</dbReference>
<dbReference type="InterPro" id="IPR016818">
    <property type="entry name" value="NOSIP"/>
</dbReference>
<dbReference type="InterPro" id="IPR031790">
    <property type="entry name" value="Znf-NOSIP"/>
</dbReference>
<dbReference type="InterPro" id="IPR001841">
    <property type="entry name" value="Znf_RING"/>
</dbReference>
<dbReference type="InterPro" id="IPR013083">
    <property type="entry name" value="Znf_RING/FYVE/PHD"/>
</dbReference>
<dbReference type="PANTHER" id="PTHR13063">
    <property type="entry name" value="ENOS INTERACTING PROTEIN"/>
    <property type="match status" value="1"/>
</dbReference>
<dbReference type="PANTHER" id="PTHR13063:SF10">
    <property type="entry name" value="NITRIC OXIDE SYNTHASE-INTERACTING PROTEIN"/>
    <property type="match status" value="1"/>
</dbReference>
<dbReference type="Pfam" id="PF04641">
    <property type="entry name" value="Rtf2"/>
    <property type="match status" value="1"/>
</dbReference>
<dbReference type="Pfam" id="PF15906">
    <property type="entry name" value="zf-NOSIP"/>
    <property type="match status" value="1"/>
</dbReference>
<dbReference type="PIRSF" id="PIRSF023577">
    <property type="entry name" value="ENOS_interacting"/>
    <property type="match status" value="1"/>
</dbReference>
<dbReference type="SMART" id="SM00184">
    <property type="entry name" value="RING"/>
    <property type="match status" value="2"/>
</dbReference>
<dbReference type="SUPFAM" id="SSF57850">
    <property type="entry name" value="RING/U-box"/>
    <property type="match status" value="2"/>
</dbReference>
<keyword id="KW-0175">Coiled coil</keyword>
<keyword id="KW-0963">Cytoplasm</keyword>
<keyword id="KW-0539">Nucleus</keyword>
<keyword id="KW-1185">Reference proteome</keyword>
<sequence length="333" mass="37764">MPRHSKHSCSNSGKFSNYERQLLKYGTTTERLGKDSIKNFDSCSLCLNDVIMPVICNKGHLYCKECILTSLIDQKKLIKIKEKEWEQYQNKLKYEQDQKQEKQHQDSIKEFEKNVITLEGIGSNDDNNNNNNNNNNNNNNNNNNNNNNNNNNNNNNNNNNNTTTTTTTTTTTSDVNNKDKEKKEIVEKEIKLNSYWVITPDNKDKAIEKPRSYTVCPADGKHPLKSAQLINVHFTNVKPSSSDSNDSNNQYCCPICSKVLSNSTKTRLLKRCGHVFCSCLDKFKEDSSSQLSCYVCDKPYTEDEIIQIHSGGTGFSGSGSNLEAKKYTHTAIV</sequence>